<protein>
    <recommendedName>
        <fullName evidence="1">DNA replication and repair protein RecF</fullName>
    </recommendedName>
</protein>
<reference key="1">
    <citation type="journal article" date="2010" name="BMC Genomics">
        <title>Complete genome sequence and lifestyle of black-pigmented Corynebacterium aurimucosum ATCC 700975 (formerly C. nigricans CN-1) isolated from a vaginal swab of a woman with spontaneous abortion.</title>
        <authorList>
            <person name="Trost E."/>
            <person name="Gotker S."/>
            <person name="Schneider J."/>
            <person name="Schneiker-Bekel S."/>
            <person name="Szczepanowski R."/>
            <person name="Tilker A."/>
            <person name="Viehoever P."/>
            <person name="Arnold W."/>
            <person name="Bekel T."/>
            <person name="Blom J."/>
            <person name="Gartemann K.H."/>
            <person name="Linke B."/>
            <person name="Goesmann A."/>
            <person name="Puhler A."/>
            <person name="Shukla S.K."/>
            <person name="Tauch A."/>
        </authorList>
    </citation>
    <scope>NUCLEOTIDE SEQUENCE [LARGE SCALE GENOMIC DNA]</scope>
    <source>
        <strain>ATCC 700975 / DSM 44827 / CIP 107346 / CN-1</strain>
    </source>
</reference>
<organism>
    <name type="scientific">Corynebacterium aurimucosum (strain ATCC 700975 / DSM 44827 / CIP 107346 / CN-1)</name>
    <name type="common">Corynebacterium nigricans</name>
    <dbReference type="NCBI Taxonomy" id="548476"/>
    <lineage>
        <taxon>Bacteria</taxon>
        <taxon>Bacillati</taxon>
        <taxon>Actinomycetota</taxon>
        <taxon>Actinomycetes</taxon>
        <taxon>Mycobacteriales</taxon>
        <taxon>Corynebacteriaceae</taxon>
        <taxon>Corynebacterium</taxon>
    </lineage>
</organism>
<feature type="chain" id="PRO_1000133682" description="DNA replication and repair protein RecF">
    <location>
        <begin position="1"/>
        <end position="392"/>
    </location>
</feature>
<feature type="binding site" evidence="1">
    <location>
        <begin position="30"/>
        <end position="37"/>
    </location>
    <ligand>
        <name>ATP</name>
        <dbReference type="ChEBI" id="CHEBI:30616"/>
    </ligand>
</feature>
<gene>
    <name evidence="1" type="primary">recF</name>
    <name type="ordered locus">cauri_0003</name>
</gene>
<evidence type="ECO:0000255" key="1">
    <source>
        <dbReference type="HAMAP-Rule" id="MF_00365"/>
    </source>
</evidence>
<proteinExistence type="inferred from homology"/>
<dbReference type="EMBL" id="CP001601">
    <property type="protein sequence ID" value="ACP31602.1"/>
    <property type="molecule type" value="Genomic_DNA"/>
</dbReference>
<dbReference type="RefSeq" id="WP_010188101.1">
    <property type="nucleotide sequence ID" value="NC_012590.1"/>
</dbReference>
<dbReference type="SMR" id="C3PE74"/>
<dbReference type="STRING" id="548476.cauri_0003"/>
<dbReference type="GeneID" id="31922629"/>
<dbReference type="KEGG" id="car:cauri_0003"/>
<dbReference type="eggNOG" id="COG1195">
    <property type="taxonomic scope" value="Bacteria"/>
</dbReference>
<dbReference type="HOGENOM" id="CLU_040267_1_1_11"/>
<dbReference type="OrthoDB" id="9803889at2"/>
<dbReference type="Proteomes" id="UP000002077">
    <property type="component" value="Chromosome"/>
</dbReference>
<dbReference type="GO" id="GO:0005737">
    <property type="term" value="C:cytoplasm"/>
    <property type="evidence" value="ECO:0007669"/>
    <property type="project" value="UniProtKB-SubCell"/>
</dbReference>
<dbReference type="GO" id="GO:0005524">
    <property type="term" value="F:ATP binding"/>
    <property type="evidence" value="ECO:0007669"/>
    <property type="project" value="UniProtKB-UniRule"/>
</dbReference>
<dbReference type="GO" id="GO:0003697">
    <property type="term" value="F:single-stranded DNA binding"/>
    <property type="evidence" value="ECO:0007669"/>
    <property type="project" value="UniProtKB-UniRule"/>
</dbReference>
<dbReference type="GO" id="GO:0006260">
    <property type="term" value="P:DNA replication"/>
    <property type="evidence" value="ECO:0007669"/>
    <property type="project" value="UniProtKB-UniRule"/>
</dbReference>
<dbReference type="GO" id="GO:0000731">
    <property type="term" value="P:DNA synthesis involved in DNA repair"/>
    <property type="evidence" value="ECO:0007669"/>
    <property type="project" value="TreeGrafter"/>
</dbReference>
<dbReference type="GO" id="GO:0006302">
    <property type="term" value="P:double-strand break repair"/>
    <property type="evidence" value="ECO:0007669"/>
    <property type="project" value="TreeGrafter"/>
</dbReference>
<dbReference type="GO" id="GO:0009432">
    <property type="term" value="P:SOS response"/>
    <property type="evidence" value="ECO:0007669"/>
    <property type="project" value="UniProtKB-UniRule"/>
</dbReference>
<dbReference type="CDD" id="cd03242">
    <property type="entry name" value="ABC_RecF"/>
    <property type="match status" value="1"/>
</dbReference>
<dbReference type="Gene3D" id="3.40.50.300">
    <property type="entry name" value="P-loop containing nucleotide triphosphate hydrolases"/>
    <property type="match status" value="1"/>
</dbReference>
<dbReference type="Gene3D" id="1.20.1050.90">
    <property type="entry name" value="RecF/RecN/SMC, N-terminal domain"/>
    <property type="match status" value="1"/>
</dbReference>
<dbReference type="HAMAP" id="MF_00365">
    <property type="entry name" value="RecF"/>
    <property type="match status" value="1"/>
</dbReference>
<dbReference type="InterPro" id="IPR001238">
    <property type="entry name" value="DNA-binding_RecF"/>
</dbReference>
<dbReference type="InterPro" id="IPR018078">
    <property type="entry name" value="DNA-binding_RecF_CS"/>
</dbReference>
<dbReference type="InterPro" id="IPR027417">
    <property type="entry name" value="P-loop_NTPase"/>
</dbReference>
<dbReference type="InterPro" id="IPR003395">
    <property type="entry name" value="RecF/RecN/SMC_N"/>
</dbReference>
<dbReference type="InterPro" id="IPR042174">
    <property type="entry name" value="RecF_2"/>
</dbReference>
<dbReference type="NCBIfam" id="TIGR00611">
    <property type="entry name" value="recf"/>
    <property type="match status" value="1"/>
</dbReference>
<dbReference type="PANTHER" id="PTHR32182">
    <property type="entry name" value="DNA REPLICATION AND REPAIR PROTEIN RECF"/>
    <property type="match status" value="1"/>
</dbReference>
<dbReference type="PANTHER" id="PTHR32182:SF0">
    <property type="entry name" value="DNA REPLICATION AND REPAIR PROTEIN RECF"/>
    <property type="match status" value="1"/>
</dbReference>
<dbReference type="Pfam" id="PF02463">
    <property type="entry name" value="SMC_N"/>
    <property type="match status" value="1"/>
</dbReference>
<dbReference type="SUPFAM" id="SSF52540">
    <property type="entry name" value="P-loop containing nucleoside triphosphate hydrolases"/>
    <property type="match status" value="1"/>
</dbReference>
<dbReference type="PROSITE" id="PS00617">
    <property type="entry name" value="RECF_1"/>
    <property type="match status" value="1"/>
</dbReference>
<dbReference type="PROSITE" id="PS00618">
    <property type="entry name" value="RECF_2"/>
    <property type="match status" value="1"/>
</dbReference>
<accession>C3PE74</accession>
<sequence>MYIRDLDVRDFRSWPELTLRLKPGITLFVGRNGFGKTNIVEAIGYTAHLSSHRVAHDAPLVRQGAHNARISATAVNQGRELTAHLLIKPHAANQAQINRTRLKSPRELLGVVKTVLFSPEDLSLVRGEPAARRQYLDDIIASRTPRLAGVKADYDKVLKQRNALLKSASPSLRRGYSDSDGASALATLDVWDTQLSSLGAQVIQARLALVDELRELIPAAYAGLAPESRPAAIDYKSTVDISDREVIEAMMLTELATKRQREIERGISLVGPHRDDLVLNLGTSPAKGFASHGETWSYAISLRLAEFNLLRQDGTDPILILDDVFAELDAKRREKLVRLAAGAEQVLITAAVDEDLPGNLQPIERFTVTVRDTDEGRISEIAPYTAGGDEDD</sequence>
<comment type="function">
    <text evidence="1">The RecF protein is involved in DNA metabolism; it is required for DNA replication and normal SOS inducibility. RecF binds preferentially to single-stranded, linear DNA. It also seems to bind ATP.</text>
</comment>
<comment type="subcellular location">
    <subcellularLocation>
        <location evidence="1">Cytoplasm</location>
    </subcellularLocation>
</comment>
<comment type="similarity">
    <text evidence="1">Belongs to the RecF family.</text>
</comment>
<keyword id="KW-0067">ATP-binding</keyword>
<keyword id="KW-0963">Cytoplasm</keyword>
<keyword id="KW-0227">DNA damage</keyword>
<keyword id="KW-0234">DNA repair</keyword>
<keyword id="KW-0235">DNA replication</keyword>
<keyword id="KW-0238">DNA-binding</keyword>
<keyword id="KW-0547">Nucleotide-binding</keyword>
<keyword id="KW-1185">Reference proteome</keyword>
<keyword id="KW-0742">SOS response</keyword>
<name>RECF_CORA7</name>